<comment type="catalytic activity">
    <reaction>
        <text>Endohydrolysis of (1-&gt;4)-beta-D-xylosidic linkages in xylans.</text>
        <dbReference type="EC" id="3.2.1.8"/>
    </reaction>
</comment>
<comment type="pathway">
    <text>Glycan degradation; xylan degradation.</text>
</comment>
<comment type="subunit">
    <text>Monomer.</text>
</comment>
<comment type="subcellular location">
    <subcellularLocation>
        <location>Secreted</location>
    </subcellularLocation>
</comment>
<comment type="similarity">
    <text evidence="3">Belongs to the glycosyl hydrolase 10 (cellulase F) family.</text>
</comment>
<reference key="1">
    <citation type="journal article" date="1998" name="Protein Sci.">
        <title>Structure of the xylanase from Penicillium simplicissimum.</title>
        <authorList>
            <person name="Schmidt A."/>
            <person name="Schlacher A."/>
            <person name="Steiner W."/>
            <person name="Schwab H."/>
            <person name="Kratky C."/>
        </authorList>
    </citation>
    <scope>NUCLEOTIDE SEQUENCE [GENOMIC DNA]</scope>
    <scope>X-RAY CRYSTALLOGRAPHY (1.75 ANGSTROMS)</scope>
    <scope>PYROGLUTAMATE FORMATION AT GLN-1</scope>
    <source>
        <strain>BT 2246</strain>
    </source>
</reference>
<reference key="2">
    <citation type="journal article" date="1999" name="Biochemistry">
        <title>Xylan binding subsite mapping in the xylanase from Penicillium simplicissimum using xylooligosaccharides as cryo-protectant.</title>
        <authorList>
            <person name="Schmidt A."/>
            <person name="Gubitz G.M."/>
            <person name="Kratky C."/>
        </authorList>
    </citation>
    <scope>X-RAY CRYSTALLOGRAPHY (2.25 ANGSTROMS)</scope>
</reference>
<keyword id="KW-0002">3D-structure</keyword>
<keyword id="KW-0119">Carbohydrate metabolism</keyword>
<keyword id="KW-1015">Disulfide bond</keyword>
<keyword id="KW-0326">Glycosidase</keyword>
<keyword id="KW-0378">Hydrolase</keyword>
<keyword id="KW-0624">Polysaccharide degradation</keyword>
<keyword id="KW-0873">Pyrrolidone carboxylic acid</keyword>
<keyword id="KW-0964">Secreted</keyword>
<keyword id="KW-0858">Xylan degradation</keyword>
<organism>
    <name type="scientific">Penicillium simplicissimum</name>
    <dbReference type="NCBI Taxonomy" id="69488"/>
    <lineage>
        <taxon>Eukaryota</taxon>
        <taxon>Fungi</taxon>
        <taxon>Dikarya</taxon>
        <taxon>Ascomycota</taxon>
        <taxon>Pezizomycotina</taxon>
        <taxon>Eurotiomycetes</taxon>
        <taxon>Eurotiomycetidae</taxon>
        <taxon>Eurotiales</taxon>
        <taxon>Aspergillaceae</taxon>
        <taxon>Penicillium</taxon>
    </lineage>
</organism>
<sequence>QASVSIDAKFKAHGKKYLGTIGDQYTLTKNTKNPAIIKADFGQLTPENSMKWDATEPNRGQFTFSGSDYLVNFAQSNGKLIRGHTLVWHSQLPGWVSSITDKNTLISVLKNHITTVMTRYKGKIYAWDVLNEIFNEDGSLRNSVFYNVIGEDYVRIAFETARSVDPNAKLYINDYNLDSAGYSKVNGMVSHVKKWLAAGIPIDGIGSQTHLGAGAGSAVAGALNALASAGTKEIAITELDIAGASSTDYVNVVNACLNQAKCVGITVWGVADPDSWRSSSSPLLFDGNYNPKAAYNAIANAL</sequence>
<feature type="chain" id="PRO_0000184067" description="Endo-1,4-beta-xylanase">
    <location>
        <begin position="1"/>
        <end position="302"/>
    </location>
</feature>
<feature type="domain" description="GH10" evidence="1">
    <location>
        <begin position="21"/>
        <end position="301"/>
    </location>
</feature>
<feature type="active site" description="Proton donor">
    <location>
        <position position="132"/>
    </location>
</feature>
<feature type="active site" description="Nucleophile">
    <location>
        <position position="238"/>
    </location>
</feature>
<feature type="modified residue" description="Pyrrolidone carboxylic acid" evidence="2">
    <location>
        <position position="1"/>
    </location>
</feature>
<feature type="disulfide bond">
    <location>
        <begin position="256"/>
        <end position="262"/>
    </location>
</feature>
<feature type="helix" evidence="4">
    <location>
        <begin position="6"/>
        <end position="11"/>
    </location>
</feature>
<feature type="turn" evidence="4">
    <location>
        <begin position="12"/>
        <end position="14"/>
    </location>
</feature>
<feature type="strand" evidence="4">
    <location>
        <begin position="16"/>
        <end position="22"/>
    </location>
</feature>
<feature type="helix" evidence="4">
    <location>
        <begin position="24"/>
        <end position="28"/>
    </location>
</feature>
<feature type="strand" evidence="5">
    <location>
        <begin position="29"/>
        <end position="31"/>
    </location>
</feature>
<feature type="helix" evidence="4">
    <location>
        <begin position="32"/>
        <end position="40"/>
    </location>
</feature>
<feature type="strand" evidence="4">
    <location>
        <begin position="42"/>
        <end position="48"/>
    </location>
</feature>
<feature type="helix" evidence="4">
    <location>
        <begin position="52"/>
        <end position="55"/>
    </location>
</feature>
<feature type="helix" evidence="4">
    <location>
        <begin position="65"/>
        <end position="76"/>
    </location>
</feature>
<feature type="strand" evidence="4">
    <location>
        <begin position="80"/>
        <end position="87"/>
    </location>
</feature>
<feature type="strand" evidence="4">
    <location>
        <begin position="89"/>
        <end position="91"/>
    </location>
</feature>
<feature type="helix" evidence="4">
    <location>
        <begin position="94"/>
        <end position="97"/>
    </location>
</feature>
<feature type="helix" evidence="4">
    <location>
        <begin position="102"/>
        <end position="119"/>
    </location>
</feature>
<feature type="turn" evidence="4">
    <location>
        <begin position="120"/>
        <end position="123"/>
    </location>
</feature>
<feature type="strand" evidence="4">
    <location>
        <begin position="125"/>
        <end position="132"/>
    </location>
</feature>
<feature type="strand" evidence="4">
    <location>
        <begin position="138"/>
        <end position="140"/>
    </location>
</feature>
<feature type="helix" evidence="4">
    <location>
        <begin position="144"/>
        <end position="148"/>
    </location>
</feature>
<feature type="helix" evidence="4">
    <location>
        <begin position="152"/>
        <end position="164"/>
    </location>
</feature>
<feature type="strand" evidence="4">
    <location>
        <begin position="168"/>
        <end position="175"/>
    </location>
</feature>
<feature type="helix" evidence="4">
    <location>
        <begin position="183"/>
        <end position="197"/>
    </location>
</feature>
<feature type="strand" evidence="4">
    <location>
        <begin position="204"/>
        <end position="207"/>
    </location>
</feature>
<feature type="helix" evidence="4">
    <location>
        <begin position="216"/>
        <end position="218"/>
    </location>
</feature>
<feature type="helix" evidence="4">
    <location>
        <begin position="219"/>
        <end position="227"/>
    </location>
</feature>
<feature type="strand" evidence="4">
    <location>
        <begin position="232"/>
        <end position="241"/>
    </location>
</feature>
<feature type="helix" evidence="4">
    <location>
        <begin position="246"/>
        <end position="257"/>
    </location>
</feature>
<feature type="strand" evidence="4">
    <location>
        <begin position="262"/>
        <end position="268"/>
    </location>
</feature>
<feature type="helix" evidence="4">
    <location>
        <begin position="272"/>
        <end position="274"/>
    </location>
</feature>
<feature type="helix" evidence="4">
    <location>
        <begin position="278"/>
        <end position="280"/>
    </location>
</feature>
<feature type="strand" evidence="4">
    <location>
        <begin position="283"/>
        <end position="285"/>
    </location>
</feature>
<feature type="helix" evidence="4">
    <location>
        <begin position="293"/>
        <end position="301"/>
    </location>
</feature>
<name>XYNA_PENSI</name>
<proteinExistence type="evidence at protein level"/>
<evidence type="ECO:0000255" key="1">
    <source>
        <dbReference type="PROSITE-ProRule" id="PRU01096"/>
    </source>
</evidence>
<evidence type="ECO:0000269" key="2">
    <source>
    </source>
</evidence>
<evidence type="ECO:0000305" key="3"/>
<evidence type="ECO:0007829" key="4">
    <source>
        <dbReference type="PDB" id="1B31"/>
    </source>
</evidence>
<evidence type="ECO:0007829" key="5">
    <source>
        <dbReference type="PDB" id="1B3X"/>
    </source>
</evidence>
<protein>
    <recommendedName>
        <fullName>Endo-1,4-beta-xylanase</fullName>
        <shortName>Xylanase</shortName>
        <ecNumber>3.2.1.8</ecNumber>
    </recommendedName>
    <alternativeName>
        <fullName>1,4-beta-D-xylan xylanohydrolase</fullName>
    </alternativeName>
</protein>
<dbReference type="EC" id="3.2.1.8"/>
<dbReference type="EMBL" id="AF070417">
    <property type="protein sequence ID" value="AAC23574.1"/>
    <property type="molecule type" value="Genomic_DNA"/>
</dbReference>
<dbReference type="PDB" id="1B30">
    <property type="method" value="X-ray"/>
    <property type="resolution" value="2.25 A"/>
    <property type="chains" value="A=2-302"/>
</dbReference>
<dbReference type="PDB" id="1B31">
    <property type="method" value="X-ray"/>
    <property type="resolution" value="1.75 A"/>
    <property type="chains" value="A=1-302"/>
</dbReference>
<dbReference type="PDB" id="1B3V">
    <property type="method" value="X-ray"/>
    <property type="resolution" value="2.40 A"/>
    <property type="chains" value="A=1-302"/>
</dbReference>
<dbReference type="PDB" id="1B3W">
    <property type="method" value="X-ray"/>
    <property type="resolution" value="2.60 A"/>
    <property type="chains" value="A=2-302"/>
</dbReference>
<dbReference type="PDB" id="1B3X">
    <property type="method" value="X-ray"/>
    <property type="resolution" value="2.20 A"/>
    <property type="chains" value="A=2-302"/>
</dbReference>
<dbReference type="PDB" id="1B3Y">
    <property type="method" value="X-ray"/>
    <property type="resolution" value="2.45 A"/>
    <property type="chains" value="A=2-302"/>
</dbReference>
<dbReference type="PDB" id="1B3Z">
    <property type="method" value="X-ray"/>
    <property type="resolution" value="2.30 A"/>
    <property type="chains" value="A=2-302"/>
</dbReference>
<dbReference type="PDB" id="1BG4">
    <property type="method" value="X-ray"/>
    <property type="resolution" value="1.75 A"/>
    <property type="chains" value="A=2-302"/>
</dbReference>
<dbReference type="PDBsum" id="1B30"/>
<dbReference type="PDBsum" id="1B31"/>
<dbReference type="PDBsum" id="1B3V"/>
<dbReference type="PDBsum" id="1B3W"/>
<dbReference type="PDBsum" id="1B3X"/>
<dbReference type="PDBsum" id="1B3Y"/>
<dbReference type="PDBsum" id="1B3Z"/>
<dbReference type="PDBsum" id="1BG4"/>
<dbReference type="SMR" id="P56588"/>
<dbReference type="CAZy" id="GH10">
    <property type="family name" value="Glycoside Hydrolase Family 10"/>
</dbReference>
<dbReference type="BioCyc" id="MetaCyc:MONOMER-16225"/>
<dbReference type="UniPathway" id="UPA00114"/>
<dbReference type="EvolutionaryTrace" id="P56588"/>
<dbReference type="GO" id="GO:0005576">
    <property type="term" value="C:extracellular region"/>
    <property type="evidence" value="ECO:0007669"/>
    <property type="project" value="UniProtKB-SubCell"/>
</dbReference>
<dbReference type="GO" id="GO:0031176">
    <property type="term" value="F:endo-1,4-beta-xylanase activity"/>
    <property type="evidence" value="ECO:0007669"/>
    <property type="project" value="UniProtKB-EC"/>
</dbReference>
<dbReference type="GO" id="GO:0045493">
    <property type="term" value="P:xylan catabolic process"/>
    <property type="evidence" value="ECO:0007669"/>
    <property type="project" value="UniProtKB-UniPathway"/>
</dbReference>
<dbReference type="FunFam" id="3.20.20.80:FF:000094">
    <property type="entry name" value="Endo-1,4-beta-xylanase"/>
    <property type="match status" value="1"/>
</dbReference>
<dbReference type="Gene3D" id="3.20.20.80">
    <property type="entry name" value="Glycosidases"/>
    <property type="match status" value="1"/>
</dbReference>
<dbReference type="InterPro" id="IPR044846">
    <property type="entry name" value="GH10"/>
</dbReference>
<dbReference type="InterPro" id="IPR031158">
    <property type="entry name" value="GH10_AS"/>
</dbReference>
<dbReference type="InterPro" id="IPR001000">
    <property type="entry name" value="GH10_dom"/>
</dbReference>
<dbReference type="InterPro" id="IPR017853">
    <property type="entry name" value="Glycoside_hydrolase_SF"/>
</dbReference>
<dbReference type="PANTHER" id="PTHR31490:SF76">
    <property type="entry name" value="ENDO-1,4-BETA-XYLANASE C"/>
    <property type="match status" value="1"/>
</dbReference>
<dbReference type="PANTHER" id="PTHR31490">
    <property type="entry name" value="GLYCOSYL HYDROLASE"/>
    <property type="match status" value="1"/>
</dbReference>
<dbReference type="Pfam" id="PF00331">
    <property type="entry name" value="Glyco_hydro_10"/>
    <property type="match status" value="1"/>
</dbReference>
<dbReference type="PRINTS" id="PR00134">
    <property type="entry name" value="GLHYDRLASE10"/>
</dbReference>
<dbReference type="SMART" id="SM00633">
    <property type="entry name" value="Glyco_10"/>
    <property type="match status" value="1"/>
</dbReference>
<dbReference type="SUPFAM" id="SSF51445">
    <property type="entry name" value="(Trans)glycosidases"/>
    <property type="match status" value="1"/>
</dbReference>
<dbReference type="PROSITE" id="PS00591">
    <property type="entry name" value="GH10_1"/>
    <property type="match status" value="1"/>
</dbReference>
<dbReference type="PROSITE" id="PS51760">
    <property type="entry name" value="GH10_2"/>
    <property type="match status" value="1"/>
</dbReference>
<accession>P56588</accession>